<feature type="chain" id="PRO_0000366929" description="Exostosin-1">
    <location>
        <begin position="1"/>
        <end position="746"/>
    </location>
</feature>
<feature type="topological domain" description="Cytoplasmic" evidence="2">
    <location>
        <begin position="1"/>
        <end position="7"/>
    </location>
</feature>
<feature type="transmembrane region" description="Helical; Signal-anchor for type II membrane protein" evidence="2">
    <location>
        <begin position="8"/>
        <end position="28"/>
    </location>
</feature>
<feature type="topological domain" description="Lumenal" evidence="2">
    <location>
        <begin position="29"/>
        <end position="746"/>
    </location>
</feature>
<feature type="binding site" evidence="1">
    <location>
        <position position="166"/>
    </location>
    <ligand>
        <name>a protein</name>
        <dbReference type="ChEBI" id="CHEBI:16541"/>
    </ligand>
    <ligandPart>
        <name>O(3)-(N-acetyl-alpha-D-glucosaminyl-poly[(1-&gt;4)-beta-D-glucuronosyl-(1-&gt;4)-N-acetyl-alpha-D-glucosaminyl]-(1-&gt;4)-beta-D-glucuronosyl-(1-&gt;3)-beta-D-galactosyl-(1-&gt;3)-beta-D-galactosyl-(1-&gt;4)-beta-D-xylosyl)-L-serine residue</name>
        <dbReference type="ChEBI" id="CHEBI:132416"/>
    </ligandPart>
</feature>
<feature type="binding site" evidence="1">
    <location>
        <position position="203"/>
    </location>
    <ligand>
        <name>a protein</name>
        <dbReference type="ChEBI" id="CHEBI:16541"/>
    </ligand>
    <ligandPart>
        <name>O(3)-(N-acetyl-alpha-D-glucosaminyl-poly[(1-&gt;4)-beta-D-glucuronosyl-(1-&gt;4)-N-acetyl-alpha-D-glucosaminyl]-(1-&gt;4)-beta-D-glucuronosyl-(1-&gt;3)-beta-D-galactosyl-(1-&gt;3)-beta-D-galactosyl-(1-&gt;4)-beta-D-xylosyl)-L-serine residue</name>
        <dbReference type="ChEBI" id="CHEBI:132416"/>
    </ligandPart>
</feature>
<feature type="binding site" evidence="1">
    <location>
        <position position="267"/>
    </location>
    <ligand>
        <name>UDP</name>
        <dbReference type="ChEBI" id="CHEBI:58223"/>
    </ligand>
</feature>
<feature type="binding site" evidence="1">
    <location>
        <position position="269"/>
    </location>
    <ligand>
        <name>UDP</name>
        <dbReference type="ChEBI" id="CHEBI:58223"/>
    </ligand>
</feature>
<feature type="binding site" evidence="1">
    <location>
        <position position="271"/>
    </location>
    <ligand>
        <name>UDP</name>
        <dbReference type="ChEBI" id="CHEBI:58223"/>
    </ligand>
</feature>
<feature type="binding site" evidence="1">
    <location>
        <position position="280"/>
    </location>
    <ligand>
        <name>UDP</name>
        <dbReference type="ChEBI" id="CHEBI:58223"/>
    </ligand>
</feature>
<feature type="binding site" evidence="1">
    <location>
        <position position="300"/>
    </location>
    <ligand>
        <name>a protein</name>
        <dbReference type="ChEBI" id="CHEBI:16541"/>
    </ligand>
    <ligandPart>
        <name>O(3)-(N-acetyl-alpha-D-glucosaminyl-poly[(1-&gt;4)-beta-D-glucuronosyl-(1-&gt;4)-N-acetyl-alpha-D-glucosaminyl]-(1-&gt;4)-beta-D-glucuronosyl-(1-&gt;3)-beta-D-galactosyl-(1-&gt;3)-beta-D-galactosyl-(1-&gt;4)-beta-D-xylosyl)-L-serine residue</name>
        <dbReference type="ChEBI" id="CHEBI:132416"/>
    </ligandPart>
</feature>
<feature type="binding site" evidence="1">
    <location>
        <position position="319"/>
    </location>
    <ligand>
        <name>UDP</name>
        <dbReference type="ChEBI" id="CHEBI:58223"/>
    </ligand>
</feature>
<feature type="binding site" evidence="1">
    <location>
        <position position="324"/>
    </location>
    <ligand>
        <name>UDP</name>
        <dbReference type="ChEBI" id="CHEBI:58223"/>
    </ligand>
</feature>
<feature type="binding site" evidence="1">
    <location>
        <position position="346"/>
    </location>
    <ligand>
        <name>UDP</name>
        <dbReference type="ChEBI" id="CHEBI:58223"/>
    </ligand>
</feature>
<feature type="binding site" evidence="1">
    <location>
        <position position="349"/>
    </location>
    <ligand>
        <name>UDP</name>
        <dbReference type="ChEBI" id="CHEBI:58223"/>
    </ligand>
</feature>
<feature type="glycosylation site" description="N-linked (GlcNAc...) asparagine" evidence="2">
    <location>
        <position position="89"/>
    </location>
</feature>
<feature type="glycosylation site" description="N-linked (GlcNAc...) asparagine" evidence="1">
    <location>
        <position position="330"/>
    </location>
</feature>
<feature type="disulfide bond" evidence="1">
    <location>
        <begin position="98"/>
        <end position="103"/>
    </location>
</feature>
<feature type="disulfide bond" evidence="1">
    <location>
        <begin position="109"/>
        <end position="152"/>
    </location>
</feature>
<feature type="disulfide bond" evidence="1">
    <location>
        <begin position="298"/>
        <end position="312"/>
    </location>
</feature>
<feature type="disulfide bond" evidence="1">
    <location>
        <begin position="334"/>
        <end position="355"/>
    </location>
</feature>
<feature type="disulfide bond" evidence="1">
    <location>
        <begin position="652"/>
        <end position="704"/>
    </location>
</feature>
<sequence length="746" mass="86299">MQAKKRYFILLSAGSCLALLFYFGGLQFRASRSHSRREEHSGRNGLHHPSPDHFWPRFPDALRPFVPWDQLENEDSSVHVSPRQKREANSSIYKGKKCRMESCFDFTLCKKNGFKVYVYPQQKGEKIAESYQNILAAIEGSRFYTSDPSQACLFVLSLDTLDRDQLSPQYVHNLRSKVQSLHLWNNGRNHLIFNLYSGTWPDYTEDVGFDIGQAMLAKASISTENFRPNFDVSIPLFSKDHPRTGGERGFLKFNTIPPLRKYMLVFKGKRYLTGIGSDTRNALYHVHNGEDVVLLTTCKHGKDWQKHKDSRCDRDNTEYEKYDYREMLHNATFCLVPRGRRLGSFRFLEALQAACVPVMLSNGWELPFSEVINWNQAAVIGDERLLLQIPSTIRSIHQDKILALRQQTQFLWEAYFSSVEKIVLTTLEIIQDRIFKHISRNSLIWNKHPGGLFVLPQYSSYLGDFPYYYANLGLKPPSKFTAVIHAVTPLVSQSQPVLKLLVAAAKSQYCAQIIVLWNCDKPLPAKHRWPATSVPVIVIEGESKVMSSRFLPYDNIITDAVLSLDEDTVLSTTEVDFAFTVWQSFPERIVGYPARSHFWDNSKERWGYTSKWTNDYSMVLTGAAIYHKYYHYLYTHYLPASLKNMVDQLANCEDILMNFLVSAVTKLPPIKVTQKKQYKETMMGQTSRASRWADPDHFAQRQSCMNTFASWFGYMPLIHSQMRLDPVLFKDQVSILRKKYRDIERL</sequence>
<keyword id="KW-1015">Disulfide bond</keyword>
<keyword id="KW-0256">Endoplasmic reticulum</keyword>
<keyword id="KW-0325">Glycoprotein</keyword>
<keyword id="KW-0328">Glycosyltransferase</keyword>
<keyword id="KW-0333">Golgi apparatus</keyword>
<keyword id="KW-0464">Manganese</keyword>
<keyword id="KW-0472">Membrane</keyword>
<keyword id="KW-0479">Metal-binding</keyword>
<keyword id="KW-1185">Reference proteome</keyword>
<keyword id="KW-0735">Signal-anchor</keyword>
<keyword id="KW-0808">Transferase</keyword>
<keyword id="KW-0812">Transmembrane</keyword>
<keyword id="KW-1133">Transmembrane helix</keyword>
<gene>
    <name type="primary">EXT1</name>
</gene>
<organism>
    <name type="scientific">Bos taurus</name>
    <name type="common">Bovine</name>
    <dbReference type="NCBI Taxonomy" id="9913"/>
    <lineage>
        <taxon>Eukaryota</taxon>
        <taxon>Metazoa</taxon>
        <taxon>Chordata</taxon>
        <taxon>Craniata</taxon>
        <taxon>Vertebrata</taxon>
        <taxon>Euteleostomi</taxon>
        <taxon>Mammalia</taxon>
        <taxon>Eutheria</taxon>
        <taxon>Laurasiatheria</taxon>
        <taxon>Artiodactyla</taxon>
        <taxon>Ruminantia</taxon>
        <taxon>Pecora</taxon>
        <taxon>Bovidae</taxon>
        <taxon>Bovinae</taxon>
        <taxon>Bos</taxon>
    </lineage>
</organism>
<reference key="1">
    <citation type="submission" date="2007-04" db="EMBL/GenBank/DDBJ databases">
        <authorList>
            <consortium name="NIH - Mammalian Gene Collection (MGC) project"/>
        </authorList>
    </citation>
    <scope>NUCLEOTIDE SEQUENCE [LARGE SCALE MRNA]</scope>
    <source>
        <strain>Hereford</strain>
        <tissue>Fetal skin</tissue>
    </source>
</reference>
<protein>
    <recommendedName>
        <fullName evidence="3">Exostosin-1</fullName>
        <ecNumber evidence="1">2.4.1.225</ecNumber>
    </recommendedName>
    <alternativeName>
        <fullName evidence="1">N-acetylglucosaminyl-proteoglycan 4-beta-glucuronosyltransferase</fullName>
    </alternativeName>
</protein>
<proteinExistence type="evidence at transcript level"/>
<dbReference type="EC" id="2.4.1.225" evidence="1"/>
<dbReference type="EMBL" id="BC140568">
    <property type="protein sequence ID" value="AAI40569.1"/>
    <property type="molecule type" value="mRNA"/>
</dbReference>
<dbReference type="RefSeq" id="NP_001091564.1">
    <property type="nucleotide sequence ID" value="NM_001098095.2"/>
</dbReference>
<dbReference type="SMR" id="A5D7I4"/>
<dbReference type="FunCoup" id="A5D7I4">
    <property type="interactions" value="2178"/>
</dbReference>
<dbReference type="STRING" id="9913.ENSBTAP00000008154"/>
<dbReference type="CAZy" id="GT47">
    <property type="family name" value="Glycosyltransferase Family 47"/>
</dbReference>
<dbReference type="CAZy" id="GT64">
    <property type="family name" value="Glycosyltransferase Family 64"/>
</dbReference>
<dbReference type="GlyCosmos" id="A5D7I4">
    <property type="glycosylation" value="2 sites, No reported glycans"/>
</dbReference>
<dbReference type="GlyGen" id="A5D7I4">
    <property type="glycosylation" value="2 sites"/>
</dbReference>
<dbReference type="PaxDb" id="9913-ENSBTAP00000008154"/>
<dbReference type="Ensembl" id="ENSBTAT00000008154.6">
    <property type="protein sequence ID" value="ENSBTAP00000008154.4"/>
    <property type="gene ID" value="ENSBTAG00000006209.6"/>
</dbReference>
<dbReference type="GeneID" id="538602"/>
<dbReference type="KEGG" id="bta:538602"/>
<dbReference type="CTD" id="2131"/>
<dbReference type="VEuPathDB" id="HostDB:ENSBTAG00000006209"/>
<dbReference type="VGNC" id="VGNC:28665">
    <property type="gene designation" value="EXT1"/>
</dbReference>
<dbReference type="eggNOG" id="KOG1021">
    <property type="taxonomic scope" value="Eukaryota"/>
</dbReference>
<dbReference type="GeneTree" id="ENSGT00940000155321"/>
<dbReference type="HOGENOM" id="CLU_013906_4_0_1"/>
<dbReference type="InParanoid" id="A5D7I4"/>
<dbReference type="OMA" id="CRHGKAW"/>
<dbReference type="OrthoDB" id="5954868at2759"/>
<dbReference type="TreeFam" id="TF314231"/>
<dbReference type="Reactome" id="R-BTA-2022928">
    <property type="pathway name" value="HS-GAG biosynthesis"/>
</dbReference>
<dbReference type="UniPathway" id="UPA00378"/>
<dbReference type="Proteomes" id="UP000009136">
    <property type="component" value="Chromosome 14"/>
</dbReference>
<dbReference type="Bgee" id="ENSBTAG00000006209">
    <property type="expression patterns" value="Expressed in ascending colon and 106 other cell types or tissues"/>
</dbReference>
<dbReference type="GO" id="GO:1902494">
    <property type="term" value="C:catalytic complex"/>
    <property type="evidence" value="ECO:0000250"/>
    <property type="project" value="UniProtKB"/>
</dbReference>
<dbReference type="GO" id="GO:0005783">
    <property type="term" value="C:endoplasmic reticulum"/>
    <property type="evidence" value="ECO:0000250"/>
    <property type="project" value="UniProtKB"/>
</dbReference>
<dbReference type="GO" id="GO:0005789">
    <property type="term" value="C:endoplasmic reticulum membrane"/>
    <property type="evidence" value="ECO:0007669"/>
    <property type="project" value="UniProtKB-SubCell"/>
</dbReference>
<dbReference type="GO" id="GO:0005794">
    <property type="term" value="C:Golgi apparatus"/>
    <property type="evidence" value="ECO:0000250"/>
    <property type="project" value="UniProtKB"/>
</dbReference>
<dbReference type="GO" id="GO:0000139">
    <property type="term" value="C:Golgi membrane"/>
    <property type="evidence" value="ECO:0007669"/>
    <property type="project" value="UniProtKB-SubCell"/>
</dbReference>
<dbReference type="GO" id="GO:0045202">
    <property type="term" value="C:synapse"/>
    <property type="evidence" value="ECO:0007669"/>
    <property type="project" value="GOC"/>
</dbReference>
<dbReference type="GO" id="GO:0008375">
    <property type="term" value="F:acetylglucosaminyltransferase activity"/>
    <property type="evidence" value="ECO:0000318"/>
    <property type="project" value="GO_Central"/>
</dbReference>
<dbReference type="GO" id="GO:0050508">
    <property type="term" value="F:glucuronosyl-N-acetylglucosaminyl-proteoglycan 4-alpha-N-acetylglucosaminyltransferase activity"/>
    <property type="evidence" value="ECO:0007669"/>
    <property type="project" value="UniProtKB-EC"/>
</dbReference>
<dbReference type="GO" id="GO:0015020">
    <property type="term" value="F:glucuronosyltransferase activity"/>
    <property type="evidence" value="ECO:0000318"/>
    <property type="project" value="GO_Central"/>
</dbReference>
<dbReference type="GO" id="GO:0046872">
    <property type="term" value="F:metal ion binding"/>
    <property type="evidence" value="ECO:0007669"/>
    <property type="project" value="UniProtKB-KW"/>
</dbReference>
<dbReference type="GO" id="GO:0050509">
    <property type="term" value="F:N-acetylglucosaminyl-proteoglycan 4-beta-glucuronosyltransferase activity"/>
    <property type="evidence" value="ECO:0000250"/>
    <property type="project" value="UniProtKB"/>
</dbReference>
<dbReference type="GO" id="GO:0046982">
    <property type="term" value="F:protein heterodimerization activity"/>
    <property type="evidence" value="ECO:0007669"/>
    <property type="project" value="Ensembl"/>
</dbReference>
<dbReference type="GO" id="GO:0042803">
    <property type="term" value="F:protein homodimerization activity"/>
    <property type="evidence" value="ECO:0007669"/>
    <property type="project" value="Ensembl"/>
</dbReference>
<dbReference type="GO" id="GO:0019882">
    <property type="term" value="P:antigen processing and presentation"/>
    <property type="evidence" value="ECO:0007669"/>
    <property type="project" value="Ensembl"/>
</dbReference>
<dbReference type="GO" id="GO:0007411">
    <property type="term" value="P:axon guidance"/>
    <property type="evidence" value="ECO:0007669"/>
    <property type="project" value="Ensembl"/>
</dbReference>
<dbReference type="GO" id="GO:0071711">
    <property type="term" value="P:basement membrane organization"/>
    <property type="evidence" value="ECO:0007669"/>
    <property type="project" value="Ensembl"/>
</dbReference>
<dbReference type="GO" id="GO:0001974">
    <property type="term" value="P:blood vessel remodeling"/>
    <property type="evidence" value="ECO:0007669"/>
    <property type="project" value="Ensembl"/>
</dbReference>
<dbReference type="GO" id="GO:0030509">
    <property type="term" value="P:BMP signaling pathway"/>
    <property type="evidence" value="ECO:0007669"/>
    <property type="project" value="Ensembl"/>
</dbReference>
<dbReference type="GO" id="GO:0045453">
    <property type="term" value="P:bone resorption"/>
    <property type="evidence" value="ECO:0007669"/>
    <property type="project" value="Ensembl"/>
</dbReference>
<dbReference type="GO" id="GO:0060070">
    <property type="term" value="P:canonical Wnt signaling pathway"/>
    <property type="evidence" value="ECO:0007669"/>
    <property type="project" value="Ensembl"/>
</dbReference>
<dbReference type="GO" id="GO:0060351">
    <property type="term" value="P:cartilage development involved in endochondral bone morphogenesis"/>
    <property type="evidence" value="ECO:0007669"/>
    <property type="project" value="Ensembl"/>
</dbReference>
<dbReference type="GO" id="GO:0033627">
    <property type="term" value="P:cell adhesion mediated by integrin"/>
    <property type="evidence" value="ECO:0007669"/>
    <property type="project" value="Ensembl"/>
</dbReference>
<dbReference type="GO" id="GO:0045165">
    <property type="term" value="P:cell fate commitment"/>
    <property type="evidence" value="ECO:0007669"/>
    <property type="project" value="Ensembl"/>
</dbReference>
<dbReference type="GO" id="GO:0098586">
    <property type="term" value="P:cellular response to virus"/>
    <property type="evidence" value="ECO:0007669"/>
    <property type="project" value="Ensembl"/>
</dbReference>
<dbReference type="GO" id="GO:0003415">
    <property type="term" value="P:chondrocyte hypertrophy"/>
    <property type="evidence" value="ECO:0007669"/>
    <property type="project" value="Ensembl"/>
</dbReference>
<dbReference type="GO" id="GO:0035988">
    <property type="term" value="P:chondrocyte proliferation"/>
    <property type="evidence" value="ECO:0007669"/>
    <property type="project" value="Ensembl"/>
</dbReference>
<dbReference type="GO" id="GO:0030199">
    <property type="term" value="P:collagen fibril organization"/>
    <property type="evidence" value="ECO:0007669"/>
    <property type="project" value="Ensembl"/>
</dbReference>
<dbReference type="GO" id="GO:1904888">
    <property type="term" value="P:cranial skeletal system development"/>
    <property type="evidence" value="ECO:0007669"/>
    <property type="project" value="Ensembl"/>
</dbReference>
<dbReference type="GO" id="GO:0070593">
    <property type="term" value="P:dendrite self-avoidance"/>
    <property type="evidence" value="ECO:0007669"/>
    <property type="project" value="Ensembl"/>
</dbReference>
<dbReference type="GO" id="GO:0036336">
    <property type="term" value="P:dendritic cell migration"/>
    <property type="evidence" value="ECO:0007669"/>
    <property type="project" value="Ensembl"/>
</dbReference>
<dbReference type="GO" id="GO:0060560">
    <property type="term" value="P:developmental growth involved in morphogenesis"/>
    <property type="evidence" value="ECO:0007669"/>
    <property type="project" value="Ensembl"/>
</dbReference>
<dbReference type="GO" id="GO:0072498">
    <property type="term" value="P:embryonic skeletal joint development"/>
    <property type="evidence" value="ECO:0007669"/>
    <property type="project" value="Ensembl"/>
</dbReference>
<dbReference type="GO" id="GO:0003416">
    <property type="term" value="P:endochondral bone growth"/>
    <property type="evidence" value="ECO:0007669"/>
    <property type="project" value="Ensembl"/>
</dbReference>
<dbReference type="GO" id="GO:0001958">
    <property type="term" value="P:endochondral ossification"/>
    <property type="evidence" value="ECO:0007669"/>
    <property type="project" value="Ensembl"/>
</dbReference>
<dbReference type="GO" id="GO:0007492">
    <property type="term" value="P:endoderm development"/>
    <property type="evidence" value="ECO:0007669"/>
    <property type="project" value="Ensembl"/>
</dbReference>
<dbReference type="GO" id="GO:0060441">
    <property type="term" value="P:epithelial tube branching involved in lung morphogenesis"/>
    <property type="evidence" value="ECO:0007669"/>
    <property type="project" value="Ensembl"/>
</dbReference>
<dbReference type="GO" id="GO:0042596">
    <property type="term" value="P:fear response"/>
    <property type="evidence" value="ECO:0007669"/>
    <property type="project" value="Ensembl"/>
</dbReference>
<dbReference type="GO" id="GO:0008543">
    <property type="term" value="P:fibroblast growth factor receptor signaling pathway"/>
    <property type="evidence" value="ECO:0007669"/>
    <property type="project" value="Ensembl"/>
</dbReference>
<dbReference type="GO" id="GO:0042044">
    <property type="term" value="P:fluid transport"/>
    <property type="evidence" value="ECO:0007669"/>
    <property type="project" value="Ensembl"/>
</dbReference>
<dbReference type="GO" id="GO:0007369">
    <property type="term" value="P:gastrulation"/>
    <property type="evidence" value="ECO:0007669"/>
    <property type="project" value="Ensembl"/>
</dbReference>
<dbReference type="GO" id="GO:0010467">
    <property type="term" value="P:gene expression"/>
    <property type="evidence" value="ECO:0007669"/>
    <property type="project" value="Ensembl"/>
</dbReference>
<dbReference type="GO" id="GO:0002067">
    <property type="term" value="P:glandular epithelial cell differentiation"/>
    <property type="evidence" value="ECO:0007669"/>
    <property type="project" value="Ensembl"/>
</dbReference>
<dbReference type="GO" id="GO:0032836">
    <property type="term" value="P:glomerular basement membrane development"/>
    <property type="evidence" value="ECO:0007669"/>
    <property type="project" value="Ensembl"/>
</dbReference>
<dbReference type="GO" id="GO:0006024">
    <property type="term" value="P:glycosaminoglycan biosynthetic process"/>
    <property type="evidence" value="ECO:0007669"/>
    <property type="project" value="Ensembl"/>
</dbReference>
<dbReference type="GO" id="GO:0031069">
    <property type="term" value="P:hair follicle morphogenesis"/>
    <property type="evidence" value="ECO:0007669"/>
    <property type="project" value="Ensembl"/>
</dbReference>
<dbReference type="GO" id="GO:0060047">
    <property type="term" value="P:heart contraction"/>
    <property type="evidence" value="ECO:0007669"/>
    <property type="project" value="Ensembl"/>
</dbReference>
<dbReference type="GO" id="GO:0003128">
    <property type="term" value="P:heart field specification"/>
    <property type="evidence" value="ECO:0007669"/>
    <property type="project" value="Ensembl"/>
</dbReference>
<dbReference type="GO" id="GO:0060218">
    <property type="term" value="P:hematopoietic stem cell differentiation"/>
    <property type="evidence" value="ECO:0007669"/>
    <property type="project" value="Ensembl"/>
</dbReference>
<dbReference type="GO" id="GO:0061484">
    <property type="term" value="P:hematopoietic stem cell homeostasis"/>
    <property type="evidence" value="ECO:0007669"/>
    <property type="project" value="Ensembl"/>
</dbReference>
<dbReference type="GO" id="GO:0097241">
    <property type="term" value="P:hematopoietic stem cell migration to bone marrow"/>
    <property type="evidence" value="ECO:0007669"/>
    <property type="project" value="Ensembl"/>
</dbReference>
<dbReference type="GO" id="GO:0015012">
    <property type="term" value="P:heparan sulfate proteoglycan biosynthetic process"/>
    <property type="evidence" value="ECO:0000250"/>
    <property type="project" value="UniProtKB"/>
</dbReference>
<dbReference type="GO" id="GO:0030210">
    <property type="term" value="P:heparin proteoglycan biosynthetic process"/>
    <property type="evidence" value="ECO:0007669"/>
    <property type="project" value="Ensembl"/>
</dbReference>
<dbReference type="GO" id="GO:0002524">
    <property type="term" value="P:hypersensitivity"/>
    <property type="evidence" value="ECO:0007669"/>
    <property type="project" value="Ensembl"/>
</dbReference>
<dbReference type="GO" id="GO:0050901">
    <property type="term" value="P:leukocyte tethering or rolling"/>
    <property type="evidence" value="ECO:0007669"/>
    <property type="project" value="Ensembl"/>
</dbReference>
<dbReference type="GO" id="GO:0036022">
    <property type="term" value="P:limb joint morphogenesis"/>
    <property type="evidence" value="ECO:0007669"/>
    <property type="project" value="Ensembl"/>
</dbReference>
<dbReference type="GO" id="GO:0036339">
    <property type="term" value="P:lymphocyte adhesion to endothelial cell of high endothelial venule"/>
    <property type="evidence" value="ECO:0007669"/>
    <property type="project" value="Ensembl"/>
</dbReference>
<dbReference type="GO" id="GO:0097021">
    <property type="term" value="P:lymphocyte migration into lymphoid organs"/>
    <property type="evidence" value="ECO:0007669"/>
    <property type="project" value="Ensembl"/>
</dbReference>
<dbReference type="GO" id="GO:1901706">
    <property type="term" value="P:mesenchymal cell differentiation involved in bone development"/>
    <property type="evidence" value="ECO:0007669"/>
    <property type="project" value="Ensembl"/>
</dbReference>
<dbReference type="GO" id="GO:0007498">
    <property type="term" value="P:mesoderm development"/>
    <property type="evidence" value="ECO:0007669"/>
    <property type="project" value="Ensembl"/>
</dbReference>
<dbReference type="GO" id="GO:0061744">
    <property type="term" value="P:motor behavior"/>
    <property type="evidence" value="ECO:0007669"/>
    <property type="project" value="Ensembl"/>
</dbReference>
<dbReference type="GO" id="GO:0035264">
    <property type="term" value="P:multicellular organism growth"/>
    <property type="evidence" value="ECO:0007669"/>
    <property type="project" value="Ensembl"/>
</dbReference>
<dbReference type="GO" id="GO:0050891">
    <property type="term" value="P:multicellular organismal-level water homeostasis"/>
    <property type="evidence" value="ECO:0007669"/>
    <property type="project" value="Ensembl"/>
</dbReference>
<dbReference type="GO" id="GO:0014033">
    <property type="term" value="P:neural crest cell differentiation"/>
    <property type="evidence" value="ECO:0007669"/>
    <property type="project" value="Ensembl"/>
</dbReference>
<dbReference type="GO" id="GO:0021772">
    <property type="term" value="P:olfactory bulb development"/>
    <property type="evidence" value="ECO:0007669"/>
    <property type="project" value="Ensembl"/>
</dbReference>
<dbReference type="GO" id="GO:0021554">
    <property type="term" value="P:optic nerve development"/>
    <property type="evidence" value="ECO:0007669"/>
    <property type="project" value="Ensembl"/>
</dbReference>
<dbReference type="GO" id="GO:0043931">
    <property type="term" value="P:ossification involved in bone maturation"/>
    <property type="evidence" value="ECO:0007669"/>
    <property type="project" value="Ensembl"/>
</dbReference>
<dbReference type="GO" id="GO:0061974">
    <property type="term" value="P:perichondral bone morphogenesis"/>
    <property type="evidence" value="ECO:0007669"/>
    <property type="project" value="Ensembl"/>
</dbReference>
<dbReference type="GO" id="GO:0072112">
    <property type="term" value="P:podocyte differentiation"/>
    <property type="evidence" value="ECO:0007669"/>
    <property type="project" value="Ensembl"/>
</dbReference>
<dbReference type="GO" id="GO:0000271">
    <property type="term" value="P:polysaccharide biosynthetic process"/>
    <property type="evidence" value="ECO:0007669"/>
    <property type="project" value="Ensembl"/>
</dbReference>
<dbReference type="GO" id="GO:0030163">
    <property type="term" value="P:protein catabolic process"/>
    <property type="evidence" value="ECO:0007669"/>
    <property type="project" value="Ensembl"/>
</dbReference>
<dbReference type="GO" id="GO:0006486">
    <property type="term" value="P:protein glycosylation"/>
    <property type="evidence" value="ECO:0007669"/>
    <property type="project" value="UniProtKB-UniPathway"/>
</dbReference>
<dbReference type="GO" id="GO:0065003">
    <property type="term" value="P:protein-containing complex assembly"/>
    <property type="evidence" value="ECO:0007669"/>
    <property type="project" value="Ensembl"/>
</dbReference>
<dbReference type="GO" id="GO:0008217">
    <property type="term" value="P:regulation of blood pressure"/>
    <property type="evidence" value="ECO:0007669"/>
    <property type="project" value="Ensembl"/>
</dbReference>
<dbReference type="GO" id="GO:0010803">
    <property type="term" value="P:regulation of tumor necrosis factor-mediated signaling pathway"/>
    <property type="evidence" value="ECO:0007669"/>
    <property type="project" value="Ensembl"/>
</dbReference>
<dbReference type="GO" id="GO:0071503">
    <property type="term" value="P:response to heparin"/>
    <property type="evidence" value="ECO:0007669"/>
    <property type="project" value="Ensembl"/>
</dbReference>
<dbReference type="GO" id="GO:1990823">
    <property type="term" value="P:response to leukemia inhibitory factor"/>
    <property type="evidence" value="ECO:0007669"/>
    <property type="project" value="Ensembl"/>
</dbReference>
<dbReference type="GO" id="GO:0009642">
    <property type="term" value="P:response to light intensity"/>
    <property type="evidence" value="ECO:0007669"/>
    <property type="project" value="Ensembl"/>
</dbReference>
<dbReference type="GO" id="GO:0048733">
    <property type="term" value="P:sebaceous gland development"/>
    <property type="evidence" value="ECO:0007669"/>
    <property type="project" value="Ensembl"/>
</dbReference>
<dbReference type="GO" id="GO:0060506">
    <property type="term" value="P:smoothened signaling pathway involved in lung development"/>
    <property type="evidence" value="ECO:0007669"/>
    <property type="project" value="Ensembl"/>
</dbReference>
<dbReference type="GO" id="GO:0035176">
    <property type="term" value="P:social behavior"/>
    <property type="evidence" value="ECO:0007669"/>
    <property type="project" value="Ensembl"/>
</dbReference>
<dbReference type="GO" id="GO:0055078">
    <property type="term" value="P:sodium ion homeostasis"/>
    <property type="evidence" value="ECO:0007669"/>
    <property type="project" value="Ensembl"/>
</dbReference>
<dbReference type="GO" id="GO:0017145">
    <property type="term" value="P:stem cell division"/>
    <property type="evidence" value="ECO:0007669"/>
    <property type="project" value="Ensembl"/>
</dbReference>
<dbReference type="GO" id="GO:0062094">
    <property type="term" value="P:stomach development"/>
    <property type="evidence" value="ECO:0007669"/>
    <property type="project" value="Ensembl"/>
</dbReference>
<dbReference type="GO" id="GO:0051923">
    <property type="term" value="P:sulfation"/>
    <property type="evidence" value="ECO:0007669"/>
    <property type="project" value="Ensembl"/>
</dbReference>
<dbReference type="GO" id="GO:0060792">
    <property type="term" value="P:sweat gland development"/>
    <property type="evidence" value="ECO:0007669"/>
    <property type="project" value="Ensembl"/>
</dbReference>
<dbReference type="GO" id="GO:0035249">
    <property type="term" value="P:synaptic transmission, glutamatergic"/>
    <property type="evidence" value="ECO:0007669"/>
    <property type="project" value="Ensembl"/>
</dbReference>
<dbReference type="GO" id="GO:0120193">
    <property type="term" value="P:tight junction organization"/>
    <property type="evidence" value="ECO:0007669"/>
    <property type="project" value="Ensembl"/>
</dbReference>
<dbReference type="GO" id="GO:0007033">
    <property type="term" value="P:vacuole organization"/>
    <property type="evidence" value="ECO:0007669"/>
    <property type="project" value="Ensembl"/>
</dbReference>
<dbReference type="GO" id="GO:0042311">
    <property type="term" value="P:vasodilation"/>
    <property type="evidence" value="ECO:0007669"/>
    <property type="project" value="Ensembl"/>
</dbReference>
<dbReference type="GO" id="GO:0071625">
    <property type="term" value="P:vocalization behavior"/>
    <property type="evidence" value="ECO:0007669"/>
    <property type="project" value="Ensembl"/>
</dbReference>
<dbReference type="GO" id="GO:0042060">
    <property type="term" value="P:wound healing"/>
    <property type="evidence" value="ECO:0007669"/>
    <property type="project" value="Ensembl"/>
</dbReference>
<dbReference type="FunFam" id="3.90.550.10:FF:000034">
    <property type="entry name" value="Exostosin 1"/>
    <property type="match status" value="1"/>
</dbReference>
<dbReference type="Gene3D" id="3.90.550.10">
    <property type="entry name" value="Spore Coat Polysaccharide Biosynthesis Protein SpsA, Chain A"/>
    <property type="match status" value="1"/>
</dbReference>
<dbReference type="InterPro" id="IPR004263">
    <property type="entry name" value="Exostosin"/>
</dbReference>
<dbReference type="InterPro" id="IPR040911">
    <property type="entry name" value="Exostosin_GT47"/>
</dbReference>
<dbReference type="InterPro" id="IPR015338">
    <property type="entry name" value="GT64_dom"/>
</dbReference>
<dbReference type="InterPro" id="IPR029044">
    <property type="entry name" value="Nucleotide-diphossugar_trans"/>
</dbReference>
<dbReference type="PANTHER" id="PTHR48261">
    <property type="entry name" value="ACETYLGLUCOSAMINYLTRANSFERASE"/>
    <property type="match status" value="1"/>
</dbReference>
<dbReference type="PANTHER" id="PTHR48261:SF3">
    <property type="entry name" value="EXOSTOSIN GLYCOSYLTRANSFERASE 1"/>
    <property type="match status" value="1"/>
</dbReference>
<dbReference type="Pfam" id="PF03016">
    <property type="entry name" value="Exostosin_GT47"/>
    <property type="match status" value="1"/>
</dbReference>
<dbReference type="Pfam" id="PF09258">
    <property type="entry name" value="Glyco_transf_64"/>
    <property type="match status" value="1"/>
</dbReference>
<dbReference type="SUPFAM" id="SSF53448">
    <property type="entry name" value="Nucleotide-diphospho-sugar transferases"/>
    <property type="match status" value="1"/>
</dbReference>
<accession>A5D7I4</accession>
<evidence type="ECO:0000250" key="1">
    <source>
        <dbReference type="UniProtKB" id="Q16394"/>
    </source>
</evidence>
<evidence type="ECO:0000255" key="2"/>
<evidence type="ECO:0000305" key="3"/>
<comment type="function">
    <text evidence="1">Glycosyltransferase forming with EXT2 the heterodimeric heparan sulfate polymerase which catalyzes the elongation of the heparan sulfate glycan backbone. Glycan backbone extension consists in the alternating transfer of (1-&gt;4)-beta-D-GlcA and (1-&gt;4)-alpha-D-GlcNAc residues from their respective UDP-sugar donors. Both EXT1 and EXT2 are required for the full activity of the polymerase since EXT1 bears the N-acetylglucosaminyl-proteoglycan 4-beta-glucuronosyltransferase activity within the complex while EXT2 carries the glucuronosyl-N-acetylglucosaminyl-proteoglycan 4-alpha-N-acetylglucosaminyltransferase activity. Heparan sulfate proteoglycans are ubiquitous components of the extracellular matrix and play an important role in tissue homeostasis and signaling.</text>
</comment>
<comment type="catalytic activity">
    <reaction evidence="1">
        <text>3-O-{alpha-D-GlcNAc-[(1-&gt;4)-beta-D-GlcA-(1-&gt;4)-alpha-D-GlcNAc](n)-(1-&gt;4)-beta-D-GlcA-(1-&gt;3)-beta-D-Gal-(1-&gt;3)-beta-D-Gal-(1-&gt;4)-beta-D-Xyl}-L-seryl-[protein] + UDP-alpha-D-glucuronate = 3-O-{[(1-&gt;4)-beta-D-GlcA-(1-&gt;4)-alpha-D-GlcNAc](n+1)-(1-&gt;4)-beta-D-GlcA-(1-&gt;3)-beta-D-Gal-(1-&gt;3)-beta-D-Gal-(1-&gt;4)-beta-D-Xyl}-L-seryl-[protein] + UDP + H(+)</text>
        <dbReference type="Rhea" id="RHEA:20908"/>
        <dbReference type="Rhea" id="RHEA-COMP:12623"/>
        <dbReference type="Rhea" id="RHEA-COMP:14295"/>
        <dbReference type="ChEBI" id="CHEBI:15378"/>
        <dbReference type="ChEBI" id="CHEBI:58052"/>
        <dbReference type="ChEBI" id="CHEBI:58223"/>
        <dbReference type="ChEBI" id="CHEBI:132415"/>
        <dbReference type="ChEBI" id="CHEBI:132416"/>
        <dbReference type="EC" id="2.4.1.225"/>
    </reaction>
    <physiologicalReaction direction="left-to-right" evidence="1">
        <dbReference type="Rhea" id="RHEA:20909"/>
    </physiologicalReaction>
</comment>
<comment type="pathway">
    <text evidence="1">Protein modification; protein glycosylation.</text>
</comment>
<comment type="subunit">
    <text evidence="1">Part of the heparan sulfate polymerase, a dimeric complex composed of EXT1 and EXT2. Could also form homooligomeric complexes. Interacts with NDST1.</text>
</comment>
<comment type="subcellular location">
    <subcellularLocation>
        <location evidence="1">Golgi apparatus membrane</location>
        <topology evidence="2">Single-pass type II membrane protein</topology>
    </subcellularLocation>
    <subcellularLocation>
        <location evidence="1">Golgi apparatus</location>
        <location evidence="1">cis-Golgi network membrane</location>
        <topology evidence="2">Single-pass type II membrane protein</topology>
    </subcellularLocation>
    <subcellularLocation>
        <location evidence="1">Endoplasmic reticulum membrane</location>
        <topology evidence="2">Single-pass type II membrane protein</topology>
    </subcellularLocation>
    <text evidence="1">The active heparan sulfate polymerase complex composed of EXT1 and EXT2 is localized to the Golgi apparatus. If both proteins are individually detected in the endoplasmic reticulum, the formation of the complex promotes their transport to the Golgi.</text>
</comment>
<comment type="PTM">
    <text evidence="1">N-glycosylated.</text>
</comment>
<comment type="similarity">
    <text evidence="3">Belongs to the glycosyltransferase 47 family.</text>
</comment>
<name>EXT1_BOVIN</name>